<sequence length="175" mass="19082">MADQDQTNQQAGSDAPSFNLQRVYLKDLSLEMPNAPHVFLEQEAPQVEVSINVGGQRLAETVFESTVTVTVTTRVNDKVLYLVEGTQAGIFELANIPAEQMDPLLGIVCPTMLYPYLRANVADAITRTSLPALHLAEVNFQALYEQRLAEMAQQQPDAANGNDSGIILPPGATRQ</sequence>
<feature type="chain" id="PRO_0000055348" description="Protein-export protein SecB">
    <location>
        <begin position="1"/>
        <end position="175"/>
    </location>
</feature>
<feature type="region of interest" description="Disordered" evidence="2">
    <location>
        <begin position="153"/>
        <end position="175"/>
    </location>
</feature>
<feature type="compositionally biased region" description="Polar residues" evidence="2">
    <location>
        <begin position="153"/>
        <end position="163"/>
    </location>
</feature>
<organism>
    <name type="scientific">Bordetella bronchiseptica (strain ATCC BAA-588 / NCTC 13252 / RB50)</name>
    <name type="common">Alcaligenes bronchisepticus</name>
    <dbReference type="NCBI Taxonomy" id="257310"/>
    <lineage>
        <taxon>Bacteria</taxon>
        <taxon>Pseudomonadati</taxon>
        <taxon>Pseudomonadota</taxon>
        <taxon>Betaproteobacteria</taxon>
        <taxon>Burkholderiales</taxon>
        <taxon>Alcaligenaceae</taxon>
        <taxon>Bordetella</taxon>
    </lineage>
</organism>
<protein>
    <recommendedName>
        <fullName evidence="1">Protein-export protein SecB</fullName>
    </recommendedName>
</protein>
<comment type="function">
    <text evidence="1">One of the proteins required for the normal export of preproteins out of the cell cytoplasm. It is a molecular chaperone that binds to a subset of precursor proteins, maintaining them in a translocation-competent state. It also specifically binds to its receptor SecA.</text>
</comment>
<comment type="subunit">
    <text evidence="1">Homotetramer, a dimer of dimers. One homotetramer interacts with 1 SecA dimer.</text>
</comment>
<comment type="subcellular location">
    <subcellularLocation>
        <location evidence="1">Cytoplasm</location>
    </subcellularLocation>
</comment>
<comment type="similarity">
    <text evidence="1">Belongs to the SecB family.</text>
</comment>
<evidence type="ECO:0000255" key="1">
    <source>
        <dbReference type="HAMAP-Rule" id="MF_00821"/>
    </source>
</evidence>
<evidence type="ECO:0000256" key="2">
    <source>
        <dbReference type="SAM" id="MobiDB-lite"/>
    </source>
</evidence>
<gene>
    <name evidence="1" type="primary">secB</name>
    <name type="ordered locus">BB0295</name>
</gene>
<proteinExistence type="inferred from homology"/>
<keyword id="KW-0143">Chaperone</keyword>
<keyword id="KW-0963">Cytoplasm</keyword>
<keyword id="KW-0653">Protein transport</keyword>
<keyword id="KW-0811">Translocation</keyword>
<keyword id="KW-0813">Transport</keyword>
<reference key="1">
    <citation type="journal article" date="2003" name="Nat. Genet.">
        <title>Comparative analysis of the genome sequences of Bordetella pertussis, Bordetella parapertussis and Bordetella bronchiseptica.</title>
        <authorList>
            <person name="Parkhill J."/>
            <person name="Sebaihia M."/>
            <person name="Preston A."/>
            <person name="Murphy L.D."/>
            <person name="Thomson N.R."/>
            <person name="Harris D.E."/>
            <person name="Holden M.T.G."/>
            <person name="Churcher C.M."/>
            <person name="Bentley S.D."/>
            <person name="Mungall K.L."/>
            <person name="Cerdeno-Tarraga A.-M."/>
            <person name="Temple L."/>
            <person name="James K.D."/>
            <person name="Harris B."/>
            <person name="Quail M.A."/>
            <person name="Achtman M."/>
            <person name="Atkin R."/>
            <person name="Baker S."/>
            <person name="Basham D."/>
            <person name="Bason N."/>
            <person name="Cherevach I."/>
            <person name="Chillingworth T."/>
            <person name="Collins M."/>
            <person name="Cronin A."/>
            <person name="Davis P."/>
            <person name="Doggett J."/>
            <person name="Feltwell T."/>
            <person name="Goble A."/>
            <person name="Hamlin N."/>
            <person name="Hauser H."/>
            <person name="Holroyd S."/>
            <person name="Jagels K."/>
            <person name="Leather S."/>
            <person name="Moule S."/>
            <person name="Norberczak H."/>
            <person name="O'Neil S."/>
            <person name="Ormond D."/>
            <person name="Price C."/>
            <person name="Rabbinowitsch E."/>
            <person name="Rutter S."/>
            <person name="Sanders M."/>
            <person name="Saunders D."/>
            <person name="Seeger K."/>
            <person name="Sharp S."/>
            <person name="Simmonds M."/>
            <person name="Skelton J."/>
            <person name="Squares R."/>
            <person name="Squares S."/>
            <person name="Stevens K."/>
            <person name="Unwin L."/>
            <person name="Whitehead S."/>
            <person name="Barrell B.G."/>
            <person name="Maskell D.J."/>
        </authorList>
    </citation>
    <scope>NUCLEOTIDE SEQUENCE [LARGE SCALE GENOMIC DNA]</scope>
    <source>
        <strain>ATCC BAA-588 / NCTC 13252 / RB50</strain>
    </source>
</reference>
<name>SECB_BORBR</name>
<accession>Q7WQN5</accession>
<dbReference type="EMBL" id="BX640437">
    <property type="protein sequence ID" value="CAE30793.1"/>
    <property type="molecule type" value="Genomic_DNA"/>
</dbReference>
<dbReference type="RefSeq" id="WP_003807422.1">
    <property type="nucleotide sequence ID" value="NC_002927.3"/>
</dbReference>
<dbReference type="SMR" id="Q7WQN5"/>
<dbReference type="GeneID" id="93206523"/>
<dbReference type="KEGG" id="bbr:BB0295"/>
<dbReference type="eggNOG" id="COG1952">
    <property type="taxonomic scope" value="Bacteria"/>
</dbReference>
<dbReference type="HOGENOM" id="CLU_111574_1_0_4"/>
<dbReference type="Proteomes" id="UP000001027">
    <property type="component" value="Chromosome"/>
</dbReference>
<dbReference type="GO" id="GO:0005737">
    <property type="term" value="C:cytoplasm"/>
    <property type="evidence" value="ECO:0007669"/>
    <property type="project" value="UniProtKB-SubCell"/>
</dbReference>
<dbReference type="GO" id="GO:0051082">
    <property type="term" value="F:unfolded protein binding"/>
    <property type="evidence" value="ECO:0007669"/>
    <property type="project" value="InterPro"/>
</dbReference>
<dbReference type="GO" id="GO:0006457">
    <property type="term" value="P:protein folding"/>
    <property type="evidence" value="ECO:0007669"/>
    <property type="project" value="UniProtKB-UniRule"/>
</dbReference>
<dbReference type="GO" id="GO:0051262">
    <property type="term" value="P:protein tetramerization"/>
    <property type="evidence" value="ECO:0007669"/>
    <property type="project" value="InterPro"/>
</dbReference>
<dbReference type="GO" id="GO:0015031">
    <property type="term" value="P:protein transport"/>
    <property type="evidence" value="ECO:0007669"/>
    <property type="project" value="UniProtKB-UniRule"/>
</dbReference>
<dbReference type="Gene3D" id="3.10.420.10">
    <property type="entry name" value="SecB-like"/>
    <property type="match status" value="1"/>
</dbReference>
<dbReference type="HAMAP" id="MF_00821">
    <property type="entry name" value="SecB"/>
    <property type="match status" value="1"/>
</dbReference>
<dbReference type="InterPro" id="IPR003708">
    <property type="entry name" value="SecB"/>
</dbReference>
<dbReference type="InterPro" id="IPR035958">
    <property type="entry name" value="SecB-like_sf"/>
</dbReference>
<dbReference type="NCBIfam" id="NF004394">
    <property type="entry name" value="PRK05751.1-5"/>
    <property type="match status" value="1"/>
</dbReference>
<dbReference type="NCBIfam" id="TIGR00809">
    <property type="entry name" value="secB"/>
    <property type="match status" value="1"/>
</dbReference>
<dbReference type="PANTHER" id="PTHR36918">
    <property type="match status" value="1"/>
</dbReference>
<dbReference type="PANTHER" id="PTHR36918:SF1">
    <property type="entry name" value="PROTEIN-EXPORT PROTEIN SECB"/>
    <property type="match status" value="1"/>
</dbReference>
<dbReference type="Pfam" id="PF02556">
    <property type="entry name" value="SecB"/>
    <property type="match status" value="1"/>
</dbReference>
<dbReference type="PRINTS" id="PR01594">
    <property type="entry name" value="SECBCHAPRONE"/>
</dbReference>
<dbReference type="SUPFAM" id="SSF54611">
    <property type="entry name" value="SecB-like"/>
    <property type="match status" value="1"/>
</dbReference>